<keyword id="KW-0963">Cytoplasm</keyword>
<keyword id="KW-0903">Direct protein sequencing</keyword>
<keyword id="KW-0312">Gluconeogenesis</keyword>
<keyword id="KW-0324">Glycolysis</keyword>
<keyword id="KW-0413">Isomerase</keyword>
<accession>Q5XD48</accession>
<accession>P82478</accession>
<comment type="function">
    <text evidence="1">Involved in the gluconeogenesis. Catalyzes stereospecifically the conversion of dihydroxyacetone phosphate (DHAP) to D-glyceraldehyde-3-phosphate (G3P).</text>
</comment>
<comment type="catalytic activity">
    <reaction evidence="1">
        <text>D-glyceraldehyde 3-phosphate = dihydroxyacetone phosphate</text>
        <dbReference type="Rhea" id="RHEA:18585"/>
        <dbReference type="ChEBI" id="CHEBI:57642"/>
        <dbReference type="ChEBI" id="CHEBI:59776"/>
        <dbReference type="EC" id="5.3.1.1"/>
    </reaction>
</comment>
<comment type="pathway">
    <text evidence="1">Carbohydrate biosynthesis; gluconeogenesis.</text>
</comment>
<comment type="pathway">
    <text evidence="1">Carbohydrate degradation; glycolysis; D-glyceraldehyde 3-phosphate from glycerone phosphate: step 1/1.</text>
</comment>
<comment type="subunit">
    <text evidence="1">Homodimer.</text>
</comment>
<comment type="subcellular location">
    <subcellularLocation>
        <location evidence="1">Cytoplasm</location>
    </subcellularLocation>
</comment>
<comment type="similarity">
    <text evidence="1">Belongs to the triosephosphate isomerase family.</text>
</comment>
<feature type="initiator methionine" description="Removed" evidence="2">
    <location>
        <position position="1"/>
    </location>
</feature>
<feature type="chain" id="PRO_0000090301" description="Triosephosphate isomerase">
    <location>
        <begin position="2"/>
        <end position="252"/>
    </location>
</feature>
<feature type="active site" description="Electrophile" evidence="1">
    <location>
        <position position="96"/>
    </location>
</feature>
<feature type="active site" description="Proton acceptor" evidence="1">
    <location>
        <position position="168"/>
    </location>
</feature>
<feature type="binding site" evidence="1">
    <location>
        <begin position="10"/>
        <end position="12"/>
    </location>
    <ligand>
        <name>substrate</name>
    </ligand>
</feature>
<feature type="binding site" evidence="1">
    <location>
        <position position="174"/>
    </location>
    <ligand>
        <name>substrate</name>
    </ligand>
</feature>
<feature type="binding site" evidence="1">
    <location>
        <position position="214"/>
    </location>
    <ligand>
        <name>substrate</name>
    </ligand>
</feature>
<feature type="binding site" evidence="1">
    <location>
        <begin position="235"/>
        <end position="236"/>
    </location>
    <ligand>
        <name>substrate</name>
    </ligand>
</feature>
<feature type="sequence conflict" description="In Ref. 2; AA sequence." evidence="3" ref="2">
    <original>R</original>
    <variation>K</variation>
    <location>
        <position position="21"/>
    </location>
</feature>
<protein>
    <recommendedName>
        <fullName evidence="1">Triosephosphate isomerase</fullName>
        <shortName evidence="1">TIM</shortName>
        <shortName evidence="1">TPI</shortName>
        <ecNumber evidence="1">5.3.1.1</ecNumber>
    </recommendedName>
    <alternativeName>
        <fullName evidence="1">Triose-phosphate isomerase</fullName>
    </alternativeName>
</protein>
<organism>
    <name type="scientific">Streptococcus pyogenes serotype M6 (strain ATCC BAA-946 / MGAS10394)</name>
    <dbReference type="NCBI Taxonomy" id="286636"/>
    <lineage>
        <taxon>Bacteria</taxon>
        <taxon>Bacillati</taxon>
        <taxon>Bacillota</taxon>
        <taxon>Bacilli</taxon>
        <taxon>Lactobacillales</taxon>
        <taxon>Streptococcaceae</taxon>
        <taxon>Streptococcus</taxon>
    </lineage>
</organism>
<gene>
    <name evidence="1" type="primary">tpiA</name>
    <name type="ordered locus">M6_Spy0530</name>
</gene>
<dbReference type="EC" id="5.3.1.1" evidence="1"/>
<dbReference type="EMBL" id="CP000003">
    <property type="protein sequence ID" value="AAT86665.1"/>
    <property type="molecule type" value="Genomic_DNA"/>
</dbReference>
<dbReference type="RefSeq" id="WP_011184326.1">
    <property type="nucleotide sequence ID" value="NC_006086.1"/>
</dbReference>
<dbReference type="SMR" id="Q5XD48"/>
<dbReference type="KEGG" id="spa:M6_Spy0530"/>
<dbReference type="HOGENOM" id="CLU_024251_2_3_9"/>
<dbReference type="UniPathway" id="UPA00109">
    <property type="reaction ID" value="UER00189"/>
</dbReference>
<dbReference type="UniPathway" id="UPA00138"/>
<dbReference type="Proteomes" id="UP000001167">
    <property type="component" value="Chromosome"/>
</dbReference>
<dbReference type="GO" id="GO:0005829">
    <property type="term" value="C:cytosol"/>
    <property type="evidence" value="ECO:0007669"/>
    <property type="project" value="TreeGrafter"/>
</dbReference>
<dbReference type="GO" id="GO:0004807">
    <property type="term" value="F:triose-phosphate isomerase activity"/>
    <property type="evidence" value="ECO:0007669"/>
    <property type="project" value="UniProtKB-UniRule"/>
</dbReference>
<dbReference type="GO" id="GO:0006094">
    <property type="term" value="P:gluconeogenesis"/>
    <property type="evidence" value="ECO:0007669"/>
    <property type="project" value="UniProtKB-UniRule"/>
</dbReference>
<dbReference type="GO" id="GO:0046166">
    <property type="term" value="P:glyceraldehyde-3-phosphate biosynthetic process"/>
    <property type="evidence" value="ECO:0007669"/>
    <property type="project" value="TreeGrafter"/>
</dbReference>
<dbReference type="GO" id="GO:0019563">
    <property type="term" value="P:glycerol catabolic process"/>
    <property type="evidence" value="ECO:0007669"/>
    <property type="project" value="TreeGrafter"/>
</dbReference>
<dbReference type="GO" id="GO:0006096">
    <property type="term" value="P:glycolytic process"/>
    <property type="evidence" value="ECO:0007669"/>
    <property type="project" value="UniProtKB-UniRule"/>
</dbReference>
<dbReference type="CDD" id="cd00311">
    <property type="entry name" value="TIM"/>
    <property type="match status" value="1"/>
</dbReference>
<dbReference type="FunFam" id="3.20.20.70:FF:000016">
    <property type="entry name" value="Triosephosphate isomerase"/>
    <property type="match status" value="1"/>
</dbReference>
<dbReference type="Gene3D" id="3.20.20.70">
    <property type="entry name" value="Aldolase class I"/>
    <property type="match status" value="1"/>
</dbReference>
<dbReference type="HAMAP" id="MF_00147_B">
    <property type="entry name" value="TIM_B"/>
    <property type="match status" value="1"/>
</dbReference>
<dbReference type="InterPro" id="IPR013785">
    <property type="entry name" value="Aldolase_TIM"/>
</dbReference>
<dbReference type="InterPro" id="IPR035990">
    <property type="entry name" value="TIM_sf"/>
</dbReference>
<dbReference type="InterPro" id="IPR022896">
    <property type="entry name" value="TrioseP_Isoase_bac/euk"/>
</dbReference>
<dbReference type="InterPro" id="IPR000652">
    <property type="entry name" value="Triosephosphate_isomerase"/>
</dbReference>
<dbReference type="InterPro" id="IPR020861">
    <property type="entry name" value="Triosephosphate_isomerase_AS"/>
</dbReference>
<dbReference type="NCBIfam" id="TIGR00419">
    <property type="entry name" value="tim"/>
    <property type="match status" value="1"/>
</dbReference>
<dbReference type="PANTHER" id="PTHR21139">
    <property type="entry name" value="TRIOSEPHOSPHATE ISOMERASE"/>
    <property type="match status" value="1"/>
</dbReference>
<dbReference type="PANTHER" id="PTHR21139:SF42">
    <property type="entry name" value="TRIOSEPHOSPHATE ISOMERASE"/>
    <property type="match status" value="1"/>
</dbReference>
<dbReference type="Pfam" id="PF00121">
    <property type="entry name" value="TIM"/>
    <property type="match status" value="1"/>
</dbReference>
<dbReference type="SUPFAM" id="SSF51351">
    <property type="entry name" value="Triosephosphate isomerase (TIM)"/>
    <property type="match status" value="1"/>
</dbReference>
<dbReference type="PROSITE" id="PS00171">
    <property type="entry name" value="TIM_1"/>
    <property type="match status" value="1"/>
</dbReference>
<dbReference type="PROSITE" id="PS51440">
    <property type="entry name" value="TIM_2"/>
    <property type="match status" value="1"/>
</dbReference>
<proteinExistence type="evidence at protein level"/>
<name>TPIS_STRP6</name>
<sequence>MSRKPIIAGNWKMNKNPQEARAFVEAVASKLPSTDLVDVAVAAPAVDLVTTIEAAKDSVLKVAAQNCYFENTGAFTGETSPKVLAEMGADYVVIGHSERRDYFHETDEDINKKAKAIFANGLTPIVCCGESLETYEAGKAVEFVGAQVSAALAGLSAEQVASLVLAYEPIWAIGTGKSATQDDAQNMCKAVRDVVAADFGQEVADKVRVQYGGSVKPENVKDYMACPDVDGALVGGASLEAGSFLALLDFLN</sequence>
<evidence type="ECO:0000255" key="1">
    <source>
        <dbReference type="HAMAP-Rule" id="MF_00147"/>
    </source>
</evidence>
<evidence type="ECO:0000269" key="2">
    <source ref="2"/>
</evidence>
<evidence type="ECO:0000305" key="3"/>
<reference key="1">
    <citation type="journal article" date="2004" name="J. Infect. Dis.">
        <title>Progress toward characterization of the group A Streptococcus metagenome: complete genome sequence of a macrolide-resistant serotype M6 strain.</title>
        <authorList>
            <person name="Banks D.J."/>
            <person name="Porcella S.F."/>
            <person name="Barbian K.D."/>
            <person name="Beres S.B."/>
            <person name="Philips L.E."/>
            <person name="Voyich J.M."/>
            <person name="DeLeo F.R."/>
            <person name="Martin J.M."/>
            <person name="Somerville G.A."/>
            <person name="Musser J.M."/>
        </authorList>
    </citation>
    <scope>NUCLEOTIDE SEQUENCE [LARGE SCALE GENOMIC DNA]</scope>
    <source>
        <strain>ATCC BAA-946 / MGAS10394</strain>
    </source>
</reference>
<reference key="2">
    <citation type="submission" date="2000-05" db="UniProtKB">
        <title>Two-dimensional gel electrophoresis map of Streptococcus pyogenes proteins.</title>
        <authorList>
            <person name="Hogan D.A."/>
            <person name="Du P."/>
            <person name="Stevenson T.I."/>
            <person name="Whitton M."/>
            <person name="Kilby G.W."/>
            <person name="Rogers J."/>
            <person name="VanBogelen R.A."/>
        </authorList>
    </citation>
    <scope>PROTEIN SEQUENCE OF 2-8; 13-21; 83-113 AND 193-208</scope>
    <scope>IDENTIFICATION BY MASS SPECTROMETRY</scope>
    <source>
        <strain>JRS4 / Serotype M6</strain>
    </source>
</reference>